<proteinExistence type="inferred from homology"/>
<accession>Q318N5</accession>
<evidence type="ECO:0000250" key="1"/>
<evidence type="ECO:0000255" key="2">
    <source>
        <dbReference type="HAMAP-Rule" id="MF_00118"/>
    </source>
</evidence>
<dbReference type="EC" id="3.6.5.3" evidence="2"/>
<dbReference type="EMBL" id="CP000111">
    <property type="protein sequence ID" value="ABB50660.1"/>
    <property type="molecule type" value="Genomic_DNA"/>
</dbReference>
<dbReference type="RefSeq" id="WP_011377142.1">
    <property type="nucleotide sequence ID" value="NC_007577.1"/>
</dbReference>
<dbReference type="SMR" id="Q318N5"/>
<dbReference type="STRING" id="74546.PMT9312_1600"/>
<dbReference type="KEGG" id="pmi:PMT9312_1600"/>
<dbReference type="eggNOG" id="COG0050">
    <property type="taxonomic scope" value="Bacteria"/>
</dbReference>
<dbReference type="HOGENOM" id="CLU_007265_0_1_3"/>
<dbReference type="OrthoDB" id="9804504at2"/>
<dbReference type="Proteomes" id="UP000002715">
    <property type="component" value="Chromosome"/>
</dbReference>
<dbReference type="GO" id="GO:0005829">
    <property type="term" value="C:cytosol"/>
    <property type="evidence" value="ECO:0007669"/>
    <property type="project" value="TreeGrafter"/>
</dbReference>
<dbReference type="GO" id="GO:0005525">
    <property type="term" value="F:GTP binding"/>
    <property type="evidence" value="ECO:0007669"/>
    <property type="project" value="UniProtKB-UniRule"/>
</dbReference>
<dbReference type="GO" id="GO:0003924">
    <property type="term" value="F:GTPase activity"/>
    <property type="evidence" value="ECO:0007669"/>
    <property type="project" value="InterPro"/>
</dbReference>
<dbReference type="GO" id="GO:0003746">
    <property type="term" value="F:translation elongation factor activity"/>
    <property type="evidence" value="ECO:0007669"/>
    <property type="project" value="UniProtKB-UniRule"/>
</dbReference>
<dbReference type="CDD" id="cd01884">
    <property type="entry name" value="EF_Tu"/>
    <property type="match status" value="1"/>
</dbReference>
<dbReference type="CDD" id="cd03697">
    <property type="entry name" value="EFTU_II"/>
    <property type="match status" value="1"/>
</dbReference>
<dbReference type="CDD" id="cd03707">
    <property type="entry name" value="EFTU_III"/>
    <property type="match status" value="1"/>
</dbReference>
<dbReference type="FunFam" id="2.40.30.10:FF:000001">
    <property type="entry name" value="Elongation factor Tu"/>
    <property type="match status" value="1"/>
</dbReference>
<dbReference type="FunFam" id="2.40.30.10:FF:000046">
    <property type="entry name" value="Elongation factor Tu"/>
    <property type="match status" value="1"/>
</dbReference>
<dbReference type="FunFam" id="3.40.50.300:FF:000003">
    <property type="entry name" value="Elongation factor Tu"/>
    <property type="match status" value="1"/>
</dbReference>
<dbReference type="Gene3D" id="3.40.50.300">
    <property type="entry name" value="P-loop containing nucleotide triphosphate hydrolases"/>
    <property type="match status" value="1"/>
</dbReference>
<dbReference type="Gene3D" id="2.40.30.10">
    <property type="entry name" value="Translation factors"/>
    <property type="match status" value="2"/>
</dbReference>
<dbReference type="HAMAP" id="MF_00118_B">
    <property type="entry name" value="EF_Tu_B"/>
    <property type="match status" value="1"/>
</dbReference>
<dbReference type="InterPro" id="IPR041709">
    <property type="entry name" value="EF-Tu_GTP-bd"/>
</dbReference>
<dbReference type="InterPro" id="IPR050055">
    <property type="entry name" value="EF-Tu_GTPase"/>
</dbReference>
<dbReference type="InterPro" id="IPR004161">
    <property type="entry name" value="EFTu-like_2"/>
</dbReference>
<dbReference type="InterPro" id="IPR033720">
    <property type="entry name" value="EFTU_2"/>
</dbReference>
<dbReference type="InterPro" id="IPR031157">
    <property type="entry name" value="G_TR_CS"/>
</dbReference>
<dbReference type="InterPro" id="IPR027417">
    <property type="entry name" value="P-loop_NTPase"/>
</dbReference>
<dbReference type="InterPro" id="IPR005225">
    <property type="entry name" value="Small_GTP-bd"/>
</dbReference>
<dbReference type="InterPro" id="IPR000795">
    <property type="entry name" value="T_Tr_GTP-bd_dom"/>
</dbReference>
<dbReference type="InterPro" id="IPR009000">
    <property type="entry name" value="Transl_B-barrel_sf"/>
</dbReference>
<dbReference type="InterPro" id="IPR009001">
    <property type="entry name" value="Transl_elong_EF1A/Init_IF2_C"/>
</dbReference>
<dbReference type="InterPro" id="IPR004541">
    <property type="entry name" value="Transl_elong_EFTu/EF1A_bac/org"/>
</dbReference>
<dbReference type="InterPro" id="IPR004160">
    <property type="entry name" value="Transl_elong_EFTu/EF1A_C"/>
</dbReference>
<dbReference type="NCBIfam" id="TIGR00485">
    <property type="entry name" value="EF-Tu"/>
    <property type="match status" value="1"/>
</dbReference>
<dbReference type="NCBIfam" id="NF000766">
    <property type="entry name" value="PRK00049.1"/>
    <property type="match status" value="1"/>
</dbReference>
<dbReference type="NCBIfam" id="NF009372">
    <property type="entry name" value="PRK12735.1"/>
    <property type="match status" value="1"/>
</dbReference>
<dbReference type="NCBIfam" id="NF009373">
    <property type="entry name" value="PRK12736.1"/>
    <property type="match status" value="1"/>
</dbReference>
<dbReference type="NCBIfam" id="TIGR00231">
    <property type="entry name" value="small_GTP"/>
    <property type="match status" value="1"/>
</dbReference>
<dbReference type="PANTHER" id="PTHR43721:SF22">
    <property type="entry name" value="ELONGATION FACTOR TU, MITOCHONDRIAL"/>
    <property type="match status" value="1"/>
</dbReference>
<dbReference type="PANTHER" id="PTHR43721">
    <property type="entry name" value="ELONGATION FACTOR TU-RELATED"/>
    <property type="match status" value="1"/>
</dbReference>
<dbReference type="Pfam" id="PF00009">
    <property type="entry name" value="GTP_EFTU"/>
    <property type="match status" value="1"/>
</dbReference>
<dbReference type="Pfam" id="PF03144">
    <property type="entry name" value="GTP_EFTU_D2"/>
    <property type="match status" value="1"/>
</dbReference>
<dbReference type="Pfam" id="PF03143">
    <property type="entry name" value="GTP_EFTU_D3"/>
    <property type="match status" value="1"/>
</dbReference>
<dbReference type="PRINTS" id="PR00315">
    <property type="entry name" value="ELONGATNFCT"/>
</dbReference>
<dbReference type="SUPFAM" id="SSF50465">
    <property type="entry name" value="EF-Tu/eEF-1alpha/eIF2-gamma C-terminal domain"/>
    <property type="match status" value="1"/>
</dbReference>
<dbReference type="SUPFAM" id="SSF52540">
    <property type="entry name" value="P-loop containing nucleoside triphosphate hydrolases"/>
    <property type="match status" value="1"/>
</dbReference>
<dbReference type="SUPFAM" id="SSF50447">
    <property type="entry name" value="Translation proteins"/>
    <property type="match status" value="1"/>
</dbReference>
<dbReference type="PROSITE" id="PS00301">
    <property type="entry name" value="G_TR_1"/>
    <property type="match status" value="1"/>
</dbReference>
<dbReference type="PROSITE" id="PS51722">
    <property type="entry name" value="G_TR_2"/>
    <property type="match status" value="1"/>
</dbReference>
<protein>
    <recommendedName>
        <fullName evidence="2">Elongation factor Tu</fullName>
        <shortName evidence="2">EF-Tu</shortName>
        <ecNumber evidence="2">3.6.5.3</ecNumber>
    </recommendedName>
</protein>
<gene>
    <name evidence="2" type="primary">tuf</name>
    <name type="ordered locus">PMT9312_1600</name>
</gene>
<feature type="chain" id="PRO_1000015727" description="Elongation factor Tu">
    <location>
        <begin position="1"/>
        <end position="399"/>
    </location>
</feature>
<feature type="domain" description="tr-type G">
    <location>
        <begin position="10"/>
        <end position="204"/>
    </location>
</feature>
<feature type="region of interest" description="G1" evidence="1">
    <location>
        <begin position="19"/>
        <end position="26"/>
    </location>
</feature>
<feature type="region of interest" description="G2" evidence="1">
    <location>
        <begin position="60"/>
        <end position="64"/>
    </location>
</feature>
<feature type="region of interest" description="G3" evidence="1">
    <location>
        <begin position="81"/>
        <end position="84"/>
    </location>
</feature>
<feature type="region of interest" description="G4" evidence="1">
    <location>
        <begin position="136"/>
        <end position="139"/>
    </location>
</feature>
<feature type="region of interest" description="G5" evidence="1">
    <location>
        <begin position="174"/>
        <end position="176"/>
    </location>
</feature>
<feature type="binding site" evidence="2">
    <location>
        <begin position="19"/>
        <end position="26"/>
    </location>
    <ligand>
        <name>GTP</name>
        <dbReference type="ChEBI" id="CHEBI:37565"/>
    </ligand>
</feature>
<feature type="binding site" evidence="2">
    <location>
        <position position="26"/>
    </location>
    <ligand>
        <name>Mg(2+)</name>
        <dbReference type="ChEBI" id="CHEBI:18420"/>
    </ligand>
</feature>
<feature type="binding site" evidence="2">
    <location>
        <begin position="81"/>
        <end position="85"/>
    </location>
    <ligand>
        <name>GTP</name>
        <dbReference type="ChEBI" id="CHEBI:37565"/>
    </ligand>
</feature>
<feature type="binding site" evidence="2">
    <location>
        <begin position="136"/>
        <end position="139"/>
    </location>
    <ligand>
        <name>GTP</name>
        <dbReference type="ChEBI" id="CHEBI:37565"/>
    </ligand>
</feature>
<reference key="1">
    <citation type="journal article" date="2006" name="Science">
        <title>Genomic islands and the ecology and evolution of Prochlorococcus.</title>
        <authorList>
            <person name="Coleman M.L."/>
            <person name="Sullivan M.B."/>
            <person name="Martiny A.C."/>
            <person name="Steglich C."/>
            <person name="Barry K."/>
            <person name="Delong E.F."/>
            <person name="Chisholm S.W."/>
        </authorList>
    </citation>
    <scope>NUCLEOTIDE SEQUENCE [LARGE SCALE GENOMIC DNA]</scope>
    <source>
        <strain>MIT 9312</strain>
    </source>
</reference>
<name>EFTU_PROM9</name>
<comment type="function">
    <text evidence="2">GTP hydrolase that promotes the GTP-dependent binding of aminoacyl-tRNA to the A-site of ribosomes during protein biosynthesis.</text>
</comment>
<comment type="catalytic activity">
    <reaction evidence="2">
        <text>GTP + H2O = GDP + phosphate + H(+)</text>
        <dbReference type="Rhea" id="RHEA:19669"/>
        <dbReference type="ChEBI" id="CHEBI:15377"/>
        <dbReference type="ChEBI" id="CHEBI:15378"/>
        <dbReference type="ChEBI" id="CHEBI:37565"/>
        <dbReference type="ChEBI" id="CHEBI:43474"/>
        <dbReference type="ChEBI" id="CHEBI:58189"/>
        <dbReference type="EC" id="3.6.5.3"/>
    </reaction>
    <physiologicalReaction direction="left-to-right" evidence="2">
        <dbReference type="Rhea" id="RHEA:19670"/>
    </physiologicalReaction>
</comment>
<comment type="subunit">
    <text evidence="2">Monomer.</text>
</comment>
<comment type="subcellular location">
    <subcellularLocation>
        <location evidence="2">Cytoplasm</location>
    </subcellularLocation>
</comment>
<comment type="similarity">
    <text evidence="2">Belongs to the TRAFAC class translation factor GTPase superfamily. Classic translation factor GTPase family. EF-Tu/EF-1A subfamily.</text>
</comment>
<organism>
    <name type="scientific">Prochlorococcus marinus (strain MIT 9312)</name>
    <dbReference type="NCBI Taxonomy" id="74546"/>
    <lineage>
        <taxon>Bacteria</taxon>
        <taxon>Bacillati</taxon>
        <taxon>Cyanobacteriota</taxon>
        <taxon>Cyanophyceae</taxon>
        <taxon>Synechococcales</taxon>
        <taxon>Prochlorococcaceae</taxon>
        <taxon>Prochlorococcus</taxon>
    </lineage>
</organism>
<sequence>MAREKFERNKPHVNIGTIGHVDHGKTTLTAAITNVLAKKGQAQAQDYGDIDGAPEERERGITINTAHVEYETEGRHYAHVDCPGHADYVKNMITGAAQMDGAILVCAATDGPMAQTKEHILLAKQVGVPALVVALNKCDMVDDEEIIELVEMEIRELLDSYDFPGDDIPIVQVSGLKALEGDSTWESKIEELMTAVDASIPEPEREVDKPFLMAVEDVFSITGRGTVATGRIERGKVKVGEEVEIVGIRDTRLTTVTGVEMFRKLLDEGMAGDNVGLLLRGVQKEDIERGMVLVKKGSITPHTQFEGEVYVLKKEEGGRHTPFFAGYRPQFYIRTTDVTGQITAFTSDDGSNVEMVMPGDRIKMTGELICPVAIEQGMRFAIREGGRTIGAGVVSKILK</sequence>
<keyword id="KW-0963">Cytoplasm</keyword>
<keyword id="KW-0251">Elongation factor</keyword>
<keyword id="KW-0342">GTP-binding</keyword>
<keyword id="KW-0378">Hydrolase</keyword>
<keyword id="KW-0460">Magnesium</keyword>
<keyword id="KW-0479">Metal-binding</keyword>
<keyword id="KW-0547">Nucleotide-binding</keyword>
<keyword id="KW-0648">Protein biosynthesis</keyword>